<name>GATB_PROMM</name>
<accession>Q7TUK1</accession>
<dbReference type="EC" id="6.3.5.-" evidence="1"/>
<dbReference type="EMBL" id="BX548175">
    <property type="protein sequence ID" value="CAE22313.1"/>
    <property type="molecule type" value="Genomic_DNA"/>
</dbReference>
<dbReference type="RefSeq" id="WP_011131503.1">
    <property type="nucleotide sequence ID" value="NC_005071.1"/>
</dbReference>
<dbReference type="SMR" id="Q7TUK1"/>
<dbReference type="KEGG" id="pmt:PMT_2139"/>
<dbReference type="eggNOG" id="COG0064">
    <property type="taxonomic scope" value="Bacteria"/>
</dbReference>
<dbReference type="HOGENOM" id="CLU_019240_0_0_3"/>
<dbReference type="OrthoDB" id="9804078at2"/>
<dbReference type="Proteomes" id="UP000001423">
    <property type="component" value="Chromosome"/>
</dbReference>
<dbReference type="GO" id="GO:0050566">
    <property type="term" value="F:asparaginyl-tRNA synthase (glutamine-hydrolyzing) activity"/>
    <property type="evidence" value="ECO:0007669"/>
    <property type="project" value="RHEA"/>
</dbReference>
<dbReference type="GO" id="GO:0005524">
    <property type="term" value="F:ATP binding"/>
    <property type="evidence" value="ECO:0007669"/>
    <property type="project" value="UniProtKB-KW"/>
</dbReference>
<dbReference type="GO" id="GO:0050567">
    <property type="term" value="F:glutaminyl-tRNA synthase (glutamine-hydrolyzing) activity"/>
    <property type="evidence" value="ECO:0007669"/>
    <property type="project" value="UniProtKB-UniRule"/>
</dbReference>
<dbReference type="GO" id="GO:0070681">
    <property type="term" value="P:glutaminyl-tRNAGln biosynthesis via transamidation"/>
    <property type="evidence" value="ECO:0007669"/>
    <property type="project" value="TreeGrafter"/>
</dbReference>
<dbReference type="GO" id="GO:0006412">
    <property type="term" value="P:translation"/>
    <property type="evidence" value="ECO:0007669"/>
    <property type="project" value="UniProtKB-UniRule"/>
</dbReference>
<dbReference type="FunFam" id="1.10.10.410:FF:000001">
    <property type="entry name" value="Aspartyl/glutamyl-tRNA(Asn/Gln) amidotransferase subunit B"/>
    <property type="match status" value="1"/>
</dbReference>
<dbReference type="FunFam" id="1.10.150.380:FF:000001">
    <property type="entry name" value="Aspartyl/glutamyl-tRNA(Asn/Gln) amidotransferase subunit B"/>
    <property type="match status" value="1"/>
</dbReference>
<dbReference type="Gene3D" id="1.10.10.410">
    <property type="match status" value="1"/>
</dbReference>
<dbReference type="Gene3D" id="1.10.150.380">
    <property type="entry name" value="GatB domain, N-terminal subdomain"/>
    <property type="match status" value="1"/>
</dbReference>
<dbReference type="HAMAP" id="MF_00121">
    <property type="entry name" value="GatB"/>
    <property type="match status" value="1"/>
</dbReference>
<dbReference type="InterPro" id="IPR017959">
    <property type="entry name" value="Asn/Gln-tRNA_amidoTrfase_suB/E"/>
</dbReference>
<dbReference type="InterPro" id="IPR006075">
    <property type="entry name" value="Asn/Gln-tRNA_Trfase_suB/E_cat"/>
</dbReference>
<dbReference type="InterPro" id="IPR018027">
    <property type="entry name" value="Asn/Gln_amidotransferase"/>
</dbReference>
<dbReference type="InterPro" id="IPR003789">
    <property type="entry name" value="Asn/Gln_tRNA_amidoTrase-B-like"/>
</dbReference>
<dbReference type="InterPro" id="IPR004413">
    <property type="entry name" value="GatB"/>
</dbReference>
<dbReference type="InterPro" id="IPR042114">
    <property type="entry name" value="GatB_C_1"/>
</dbReference>
<dbReference type="InterPro" id="IPR023168">
    <property type="entry name" value="GatB_Yqey_C_2"/>
</dbReference>
<dbReference type="InterPro" id="IPR017958">
    <property type="entry name" value="Gln-tRNA_amidoTrfase_suB_CS"/>
</dbReference>
<dbReference type="InterPro" id="IPR014746">
    <property type="entry name" value="Gln_synth/guanido_kin_cat_dom"/>
</dbReference>
<dbReference type="NCBIfam" id="TIGR00133">
    <property type="entry name" value="gatB"/>
    <property type="match status" value="1"/>
</dbReference>
<dbReference type="NCBIfam" id="NF004012">
    <property type="entry name" value="PRK05477.1-2"/>
    <property type="match status" value="1"/>
</dbReference>
<dbReference type="NCBIfam" id="NF004014">
    <property type="entry name" value="PRK05477.1-4"/>
    <property type="match status" value="1"/>
</dbReference>
<dbReference type="PANTHER" id="PTHR11659">
    <property type="entry name" value="GLUTAMYL-TRNA GLN AMIDOTRANSFERASE SUBUNIT B MITOCHONDRIAL AND PROKARYOTIC PET112-RELATED"/>
    <property type="match status" value="1"/>
</dbReference>
<dbReference type="PANTHER" id="PTHR11659:SF0">
    <property type="entry name" value="GLUTAMYL-TRNA(GLN) AMIDOTRANSFERASE SUBUNIT B, MITOCHONDRIAL"/>
    <property type="match status" value="1"/>
</dbReference>
<dbReference type="Pfam" id="PF02934">
    <property type="entry name" value="GatB_N"/>
    <property type="match status" value="1"/>
</dbReference>
<dbReference type="Pfam" id="PF02637">
    <property type="entry name" value="GatB_Yqey"/>
    <property type="match status" value="1"/>
</dbReference>
<dbReference type="SMART" id="SM00845">
    <property type="entry name" value="GatB_Yqey"/>
    <property type="match status" value="1"/>
</dbReference>
<dbReference type="SUPFAM" id="SSF89095">
    <property type="entry name" value="GatB/YqeY motif"/>
    <property type="match status" value="1"/>
</dbReference>
<dbReference type="SUPFAM" id="SSF55931">
    <property type="entry name" value="Glutamine synthetase/guanido kinase"/>
    <property type="match status" value="1"/>
</dbReference>
<dbReference type="PROSITE" id="PS01234">
    <property type="entry name" value="GATB"/>
    <property type="match status" value="1"/>
</dbReference>
<comment type="function">
    <text evidence="1">Allows the formation of correctly charged Asn-tRNA(Asn) or Gln-tRNA(Gln) through the transamidation of misacylated Asp-tRNA(Asn) or Glu-tRNA(Gln) in organisms which lack either or both of asparaginyl-tRNA or glutaminyl-tRNA synthetases. The reaction takes place in the presence of glutamine and ATP through an activated phospho-Asp-tRNA(Asn) or phospho-Glu-tRNA(Gln).</text>
</comment>
<comment type="catalytic activity">
    <reaction evidence="1">
        <text>L-glutamyl-tRNA(Gln) + L-glutamine + ATP + H2O = L-glutaminyl-tRNA(Gln) + L-glutamate + ADP + phosphate + H(+)</text>
        <dbReference type="Rhea" id="RHEA:17521"/>
        <dbReference type="Rhea" id="RHEA-COMP:9681"/>
        <dbReference type="Rhea" id="RHEA-COMP:9684"/>
        <dbReference type="ChEBI" id="CHEBI:15377"/>
        <dbReference type="ChEBI" id="CHEBI:15378"/>
        <dbReference type="ChEBI" id="CHEBI:29985"/>
        <dbReference type="ChEBI" id="CHEBI:30616"/>
        <dbReference type="ChEBI" id="CHEBI:43474"/>
        <dbReference type="ChEBI" id="CHEBI:58359"/>
        <dbReference type="ChEBI" id="CHEBI:78520"/>
        <dbReference type="ChEBI" id="CHEBI:78521"/>
        <dbReference type="ChEBI" id="CHEBI:456216"/>
    </reaction>
</comment>
<comment type="catalytic activity">
    <reaction evidence="1">
        <text>L-aspartyl-tRNA(Asn) + L-glutamine + ATP + H2O = L-asparaginyl-tRNA(Asn) + L-glutamate + ADP + phosphate + 2 H(+)</text>
        <dbReference type="Rhea" id="RHEA:14513"/>
        <dbReference type="Rhea" id="RHEA-COMP:9674"/>
        <dbReference type="Rhea" id="RHEA-COMP:9677"/>
        <dbReference type="ChEBI" id="CHEBI:15377"/>
        <dbReference type="ChEBI" id="CHEBI:15378"/>
        <dbReference type="ChEBI" id="CHEBI:29985"/>
        <dbReference type="ChEBI" id="CHEBI:30616"/>
        <dbReference type="ChEBI" id="CHEBI:43474"/>
        <dbReference type="ChEBI" id="CHEBI:58359"/>
        <dbReference type="ChEBI" id="CHEBI:78515"/>
        <dbReference type="ChEBI" id="CHEBI:78516"/>
        <dbReference type="ChEBI" id="CHEBI:456216"/>
    </reaction>
</comment>
<comment type="subunit">
    <text evidence="1">Heterotrimer of A, B and C subunits.</text>
</comment>
<comment type="similarity">
    <text evidence="1">Belongs to the GatB/GatE family. GatB subfamily.</text>
</comment>
<feature type="chain" id="PRO_0000148821" description="Aspartyl/glutamyl-tRNA(Asn/Gln) amidotransferase subunit B">
    <location>
        <begin position="1"/>
        <end position="495"/>
    </location>
</feature>
<gene>
    <name evidence="1" type="primary">gatB</name>
    <name type="ordered locus">PMT_2139</name>
</gene>
<protein>
    <recommendedName>
        <fullName evidence="1">Aspartyl/glutamyl-tRNA(Asn/Gln) amidotransferase subunit B</fullName>
        <shortName evidence="1">Asp/Glu-ADT subunit B</shortName>
        <ecNumber evidence="1">6.3.5.-</ecNumber>
    </recommendedName>
</protein>
<reference key="1">
    <citation type="journal article" date="2003" name="Nature">
        <title>Genome divergence in two Prochlorococcus ecotypes reflects oceanic niche differentiation.</title>
        <authorList>
            <person name="Rocap G."/>
            <person name="Larimer F.W."/>
            <person name="Lamerdin J.E."/>
            <person name="Malfatti S."/>
            <person name="Chain P."/>
            <person name="Ahlgren N.A."/>
            <person name="Arellano A."/>
            <person name="Coleman M."/>
            <person name="Hauser L."/>
            <person name="Hess W.R."/>
            <person name="Johnson Z.I."/>
            <person name="Land M.L."/>
            <person name="Lindell D."/>
            <person name="Post A.F."/>
            <person name="Regala W."/>
            <person name="Shah M."/>
            <person name="Shaw S.L."/>
            <person name="Steglich C."/>
            <person name="Sullivan M.B."/>
            <person name="Ting C.S."/>
            <person name="Tolonen A."/>
            <person name="Webb E.A."/>
            <person name="Zinser E.R."/>
            <person name="Chisholm S.W."/>
        </authorList>
    </citation>
    <scope>NUCLEOTIDE SEQUENCE [LARGE SCALE GENOMIC DNA]</scope>
    <source>
        <strain>MIT 9313</strain>
    </source>
</reference>
<evidence type="ECO:0000255" key="1">
    <source>
        <dbReference type="HAMAP-Rule" id="MF_00121"/>
    </source>
</evidence>
<sequence>MTLATSSANGAWEAVIGLETHVQLGTNSKIFTCASTTFGDDPNTHIDPVVCGLPGTLPVLNQMVLEYAVKAAMALNLNIAEHSKFDRKQYFYPDLPKNYQISQFDEPIAEEGWIEVEVAEKGKDTYLKRIGIERLHMEEDAGKLVHAGSDRLAGSTHSLVDYNRAGVALAEIVSKPDLRTGREAAEYASEIRRIMRYLGVSDGNMQEGSLRCDVNISVRQGADAPFGTKVEIKNMNSFSAIQKACEYEIQRQIKVYEAGEAVVQETRLWDEGKQLTKSMRSKEGSSDYRYFPDPDLGPIEVMASVREGWRDELPELPAAKRHRYAEEFGLSVYDARVLTDEYPMAEYFEAAVAAGAEAKGVANWIQGDLAAYVNANRISYSTLPFRPEQLAEMVQLIDGGKISGKIAKEILPELLEKGGSPEAIVDQRGLGMISDPAAITTIVEELLAVHPQEVEAFRGGKTKLQSFFVGQLMKKTGGKADPKLANQILSKKLKG</sequence>
<proteinExistence type="inferred from homology"/>
<keyword id="KW-0067">ATP-binding</keyword>
<keyword id="KW-0436">Ligase</keyword>
<keyword id="KW-0547">Nucleotide-binding</keyword>
<keyword id="KW-0648">Protein biosynthesis</keyword>
<keyword id="KW-1185">Reference proteome</keyword>
<organism>
    <name type="scientific">Prochlorococcus marinus (strain MIT 9313)</name>
    <dbReference type="NCBI Taxonomy" id="74547"/>
    <lineage>
        <taxon>Bacteria</taxon>
        <taxon>Bacillati</taxon>
        <taxon>Cyanobacteriota</taxon>
        <taxon>Cyanophyceae</taxon>
        <taxon>Synechococcales</taxon>
        <taxon>Prochlorococcaceae</taxon>
        <taxon>Prochlorococcus</taxon>
    </lineage>
</organism>